<keyword id="KW-0418">Kinase</keyword>
<keyword id="KW-0547">Nucleotide-binding</keyword>
<keyword id="KW-1185">Reference proteome</keyword>
<keyword id="KW-0723">Serine/threonine-protein kinase</keyword>
<keyword id="KW-0808">Transferase</keyword>
<feature type="chain" id="PRO_0000316754" description="Putative phosphoenolpyruvate synthase regulatory protein">
    <location>
        <begin position="1"/>
        <end position="273"/>
    </location>
</feature>
<feature type="binding site" evidence="1">
    <location>
        <begin position="153"/>
        <end position="160"/>
    </location>
    <ligand>
        <name>ADP</name>
        <dbReference type="ChEBI" id="CHEBI:456216"/>
    </ligand>
</feature>
<comment type="function">
    <text evidence="1">Bifunctional serine/threonine kinase and phosphorylase involved in the regulation of the phosphoenolpyruvate synthase (PEPS) by catalyzing its phosphorylation/dephosphorylation.</text>
</comment>
<comment type="catalytic activity">
    <reaction evidence="1">
        <text>[pyruvate, water dikinase] + ADP = [pyruvate, water dikinase]-phosphate + AMP + H(+)</text>
        <dbReference type="Rhea" id="RHEA:46020"/>
        <dbReference type="Rhea" id="RHEA-COMP:11425"/>
        <dbReference type="Rhea" id="RHEA-COMP:11426"/>
        <dbReference type="ChEBI" id="CHEBI:15378"/>
        <dbReference type="ChEBI" id="CHEBI:43176"/>
        <dbReference type="ChEBI" id="CHEBI:68546"/>
        <dbReference type="ChEBI" id="CHEBI:456215"/>
        <dbReference type="ChEBI" id="CHEBI:456216"/>
        <dbReference type="EC" id="2.7.11.33"/>
    </reaction>
</comment>
<comment type="catalytic activity">
    <reaction evidence="1">
        <text>[pyruvate, water dikinase]-phosphate + phosphate + H(+) = [pyruvate, water dikinase] + diphosphate</text>
        <dbReference type="Rhea" id="RHEA:48580"/>
        <dbReference type="Rhea" id="RHEA-COMP:11425"/>
        <dbReference type="Rhea" id="RHEA-COMP:11426"/>
        <dbReference type="ChEBI" id="CHEBI:15378"/>
        <dbReference type="ChEBI" id="CHEBI:33019"/>
        <dbReference type="ChEBI" id="CHEBI:43176"/>
        <dbReference type="ChEBI" id="CHEBI:43474"/>
        <dbReference type="ChEBI" id="CHEBI:68546"/>
        <dbReference type="EC" id="2.7.4.28"/>
    </reaction>
</comment>
<comment type="similarity">
    <text evidence="1">Belongs to the pyruvate, phosphate/water dikinase regulatory protein family. PSRP subfamily.</text>
</comment>
<protein>
    <recommendedName>
        <fullName evidence="1">Putative phosphoenolpyruvate synthase regulatory protein</fullName>
        <shortName evidence="1">PEP synthase regulatory protein</shortName>
        <shortName evidence="1">PSRP</shortName>
        <ecNumber evidence="1">2.7.11.33</ecNumber>
        <ecNumber evidence="1">2.7.4.28</ecNumber>
    </recommendedName>
    <alternativeName>
        <fullName evidence="1">Pyruvate, water dikinase regulatory protein</fullName>
    </alternativeName>
</protein>
<reference key="1">
    <citation type="submission" date="2006-12" db="EMBL/GenBank/DDBJ databases">
        <title>Complete sequence of chromosome 1 of Verminephrobacter eiseniae EF01-2.</title>
        <authorList>
            <person name="Copeland A."/>
            <person name="Lucas S."/>
            <person name="Lapidus A."/>
            <person name="Barry K."/>
            <person name="Detter J.C."/>
            <person name="Glavina del Rio T."/>
            <person name="Dalin E."/>
            <person name="Tice H."/>
            <person name="Pitluck S."/>
            <person name="Chertkov O."/>
            <person name="Brettin T."/>
            <person name="Bruce D."/>
            <person name="Han C."/>
            <person name="Tapia R."/>
            <person name="Gilna P."/>
            <person name="Schmutz J."/>
            <person name="Larimer F."/>
            <person name="Land M."/>
            <person name="Hauser L."/>
            <person name="Kyrpides N."/>
            <person name="Kim E."/>
            <person name="Stahl D."/>
            <person name="Richardson P."/>
        </authorList>
    </citation>
    <scope>NUCLEOTIDE SEQUENCE [LARGE SCALE GENOMIC DNA]</scope>
    <source>
        <strain>EF01-2</strain>
    </source>
</reference>
<evidence type="ECO:0000255" key="1">
    <source>
        <dbReference type="HAMAP-Rule" id="MF_01062"/>
    </source>
</evidence>
<organism>
    <name type="scientific">Verminephrobacter eiseniae (strain EF01-2)</name>
    <dbReference type="NCBI Taxonomy" id="391735"/>
    <lineage>
        <taxon>Bacteria</taxon>
        <taxon>Pseudomonadati</taxon>
        <taxon>Pseudomonadota</taxon>
        <taxon>Betaproteobacteria</taxon>
        <taxon>Burkholderiales</taxon>
        <taxon>Comamonadaceae</taxon>
        <taxon>Verminephrobacter</taxon>
    </lineage>
</organism>
<accession>A1WJJ2</accession>
<gene>
    <name type="ordered locus">Veis_2049</name>
</gene>
<name>PSRP_VEREI</name>
<sequence length="273" mass="30694">MHSRTVFFVSDGTGITAETFGNAILAQFEMKPRHVRLPFVDTVDKAHQAVRQINHCGEVEGKKPIVFTTLVNMEVLKTLQDGCQGMLLDMFGTFVHPLEQELGIKSHHRVGRFSDASHSKEYSDRIAAINFSLAHDDGQSHHDLAGADVILVGVSRSGKTPTSLYLAMQCGLKTANYPLIPEDFERRQLPPALEPHRKKIFGLTIQAERLAEIRNERRPNSRYASLDNCRAEIAGAEAMMRRSSIRWLSTTTKSIEEIATTILQELRPERLVY</sequence>
<dbReference type="EC" id="2.7.11.33" evidence="1"/>
<dbReference type="EC" id="2.7.4.28" evidence="1"/>
<dbReference type="EMBL" id="CP000542">
    <property type="protein sequence ID" value="ABM57799.1"/>
    <property type="molecule type" value="Genomic_DNA"/>
</dbReference>
<dbReference type="RefSeq" id="WP_011809805.1">
    <property type="nucleotide sequence ID" value="NC_008786.1"/>
</dbReference>
<dbReference type="SMR" id="A1WJJ2"/>
<dbReference type="STRING" id="391735.Veis_2049"/>
<dbReference type="GeneID" id="76460627"/>
<dbReference type="KEGG" id="vei:Veis_2049"/>
<dbReference type="eggNOG" id="COG1806">
    <property type="taxonomic scope" value="Bacteria"/>
</dbReference>
<dbReference type="HOGENOM" id="CLU_046206_1_0_4"/>
<dbReference type="OrthoDB" id="9782201at2"/>
<dbReference type="Proteomes" id="UP000000374">
    <property type="component" value="Chromosome"/>
</dbReference>
<dbReference type="GO" id="GO:0043531">
    <property type="term" value="F:ADP binding"/>
    <property type="evidence" value="ECO:0007669"/>
    <property type="project" value="UniProtKB-UniRule"/>
</dbReference>
<dbReference type="GO" id="GO:0005524">
    <property type="term" value="F:ATP binding"/>
    <property type="evidence" value="ECO:0007669"/>
    <property type="project" value="InterPro"/>
</dbReference>
<dbReference type="GO" id="GO:0016776">
    <property type="term" value="F:phosphotransferase activity, phosphate group as acceptor"/>
    <property type="evidence" value="ECO:0007669"/>
    <property type="project" value="UniProtKB-UniRule"/>
</dbReference>
<dbReference type="GO" id="GO:0004674">
    <property type="term" value="F:protein serine/threonine kinase activity"/>
    <property type="evidence" value="ECO:0007669"/>
    <property type="project" value="UniProtKB-UniRule"/>
</dbReference>
<dbReference type="HAMAP" id="MF_01062">
    <property type="entry name" value="PSRP"/>
    <property type="match status" value="1"/>
</dbReference>
<dbReference type="InterPro" id="IPR005177">
    <property type="entry name" value="Kinase-pyrophosphorylase"/>
</dbReference>
<dbReference type="InterPro" id="IPR026530">
    <property type="entry name" value="PSRP"/>
</dbReference>
<dbReference type="NCBIfam" id="NF003742">
    <property type="entry name" value="PRK05339.1"/>
    <property type="match status" value="1"/>
</dbReference>
<dbReference type="PANTHER" id="PTHR31756">
    <property type="entry name" value="PYRUVATE, PHOSPHATE DIKINASE REGULATORY PROTEIN 1, CHLOROPLASTIC"/>
    <property type="match status" value="1"/>
</dbReference>
<dbReference type="PANTHER" id="PTHR31756:SF3">
    <property type="entry name" value="PYRUVATE, PHOSPHATE DIKINASE REGULATORY PROTEIN 1, CHLOROPLASTIC"/>
    <property type="match status" value="1"/>
</dbReference>
<dbReference type="Pfam" id="PF03618">
    <property type="entry name" value="Kinase-PPPase"/>
    <property type="match status" value="1"/>
</dbReference>
<proteinExistence type="inferred from homology"/>